<feature type="initiator methionine" description="Removed" evidence="1">
    <location>
        <position position="1"/>
    </location>
</feature>
<feature type="chain" id="PRO_0000371631" description="Small ribosomal subunit protein uS2">
    <location>
        <begin position="2"/>
        <end position="261"/>
    </location>
</feature>
<feature type="region of interest" description="Disordered" evidence="2">
    <location>
        <begin position="214"/>
        <end position="261"/>
    </location>
</feature>
<feature type="compositionally biased region" description="Acidic residues" evidence="2">
    <location>
        <begin position="222"/>
        <end position="244"/>
    </location>
</feature>
<feature type="compositionally biased region" description="Low complexity" evidence="2">
    <location>
        <begin position="245"/>
        <end position="261"/>
    </location>
</feature>
<feature type="modified residue" description="N-acetylserine" evidence="1">
    <location>
        <position position="2"/>
    </location>
</feature>
<dbReference type="EMBL" id="CR382134">
    <property type="protein sequence ID" value="CAG85591.2"/>
    <property type="status" value="ALT_SEQ"/>
    <property type="molecule type" value="Genomic_DNA"/>
</dbReference>
<dbReference type="RefSeq" id="XP_457580.2">
    <property type="nucleotide sequence ID" value="XM_457580.2"/>
</dbReference>
<dbReference type="SMR" id="Q6BW39"/>
<dbReference type="FunCoup" id="Q6BW39">
    <property type="interactions" value="1404"/>
</dbReference>
<dbReference type="STRING" id="284592.Q6BW39"/>
<dbReference type="GeneID" id="2913544"/>
<dbReference type="KEGG" id="dha:DEHA2B14564g"/>
<dbReference type="eggNOG" id="KOG0830">
    <property type="taxonomic scope" value="Eukaryota"/>
</dbReference>
<dbReference type="HOGENOM" id="CLU_058171_2_0_1"/>
<dbReference type="InParanoid" id="Q6BW39"/>
<dbReference type="OrthoDB" id="414863at2759"/>
<dbReference type="Proteomes" id="UP000000599">
    <property type="component" value="Chromosome B"/>
</dbReference>
<dbReference type="GO" id="GO:0022627">
    <property type="term" value="C:cytosolic small ribosomal subunit"/>
    <property type="evidence" value="ECO:0007669"/>
    <property type="project" value="UniProtKB-UniRule"/>
</dbReference>
<dbReference type="GO" id="GO:0003735">
    <property type="term" value="F:structural constituent of ribosome"/>
    <property type="evidence" value="ECO:0007669"/>
    <property type="project" value="UniProtKB-UniRule"/>
</dbReference>
<dbReference type="GO" id="GO:0000028">
    <property type="term" value="P:ribosomal small subunit assembly"/>
    <property type="evidence" value="ECO:0007669"/>
    <property type="project" value="UniProtKB-UniRule"/>
</dbReference>
<dbReference type="GO" id="GO:0006412">
    <property type="term" value="P:translation"/>
    <property type="evidence" value="ECO:0007669"/>
    <property type="project" value="UniProtKB-UniRule"/>
</dbReference>
<dbReference type="CDD" id="cd01425">
    <property type="entry name" value="RPS2"/>
    <property type="match status" value="1"/>
</dbReference>
<dbReference type="FunFam" id="3.40.50.10490:FF:000010">
    <property type="entry name" value="40S ribosomal protein S0"/>
    <property type="match status" value="1"/>
</dbReference>
<dbReference type="Gene3D" id="3.40.50.10490">
    <property type="entry name" value="Glucose-6-phosphate isomerase like protein, domain 1"/>
    <property type="match status" value="1"/>
</dbReference>
<dbReference type="HAMAP" id="MF_03015">
    <property type="entry name" value="Ribosomal_S2_euk"/>
    <property type="match status" value="1"/>
</dbReference>
<dbReference type="InterPro" id="IPR001865">
    <property type="entry name" value="Ribosomal_uS2"/>
</dbReference>
<dbReference type="InterPro" id="IPR018130">
    <property type="entry name" value="Ribosomal_uS2_CS"/>
</dbReference>
<dbReference type="InterPro" id="IPR027498">
    <property type="entry name" value="Ribosomal_uS2_euk"/>
</dbReference>
<dbReference type="InterPro" id="IPR005707">
    <property type="entry name" value="Ribosomal_uS2_euk/arc"/>
</dbReference>
<dbReference type="InterPro" id="IPR023591">
    <property type="entry name" value="Ribosomal_uS2_flav_dom_sf"/>
</dbReference>
<dbReference type="NCBIfam" id="TIGR01012">
    <property type="entry name" value="uS2_euk_arch"/>
    <property type="match status" value="1"/>
</dbReference>
<dbReference type="PANTHER" id="PTHR11489">
    <property type="entry name" value="40S RIBOSOMAL PROTEIN SA"/>
    <property type="match status" value="1"/>
</dbReference>
<dbReference type="Pfam" id="PF00318">
    <property type="entry name" value="Ribosomal_S2"/>
    <property type="match status" value="2"/>
</dbReference>
<dbReference type="PRINTS" id="PR00395">
    <property type="entry name" value="RIBOSOMALS2"/>
</dbReference>
<dbReference type="SUPFAM" id="SSF52313">
    <property type="entry name" value="Ribosomal protein S2"/>
    <property type="match status" value="1"/>
</dbReference>
<dbReference type="PROSITE" id="PS00962">
    <property type="entry name" value="RIBOSOMAL_S2_1"/>
    <property type="match status" value="1"/>
</dbReference>
<dbReference type="PROSITE" id="PS00963">
    <property type="entry name" value="RIBOSOMAL_S2_2"/>
    <property type="match status" value="1"/>
</dbReference>
<name>RSSA_DEBHA</name>
<keyword id="KW-0007">Acetylation</keyword>
<keyword id="KW-0963">Cytoplasm</keyword>
<keyword id="KW-1185">Reference proteome</keyword>
<keyword id="KW-0687">Ribonucleoprotein</keyword>
<keyword id="KW-0689">Ribosomal protein</keyword>
<evidence type="ECO:0000255" key="1">
    <source>
        <dbReference type="HAMAP-Rule" id="MF_03015"/>
    </source>
</evidence>
<evidence type="ECO:0000256" key="2">
    <source>
        <dbReference type="SAM" id="MobiDB-lite"/>
    </source>
</evidence>
<evidence type="ECO:0000305" key="3"/>
<reference key="1">
    <citation type="journal article" date="2004" name="Nature">
        <title>Genome evolution in yeasts.</title>
        <authorList>
            <person name="Dujon B."/>
            <person name="Sherman D."/>
            <person name="Fischer G."/>
            <person name="Durrens P."/>
            <person name="Casaregola S."/>
            <person name="Lafontaine I."/>
            <person name="de Montigny J."/>
            <person name="Marck C."/>
            <person name="Neuveglise C."/>
            <person name="Talla E."/>
            <person name="Goffard N."/>
            <person name="Frangeul L."/>
            <person name="Aigle M."/>
            <person name="Anthouard V."/>
            <person name="Babour A."/>
            <person name="Barbe V."/>
            <person name="Barnay S."/>
            <person name="Blanchin S."/>
            <person name="Beckerich J.-M."/>
            <person name="Beyne E."/>
            <person name="Bleykasten C."/>
            <person name="Boisrame A."/>
            <person name="Boyer J."/>
            <person name="Cattolico L."/>
            <person name="Confanioleri F."/>
            <person name="de Daruvar A."/>
            <person name="Despons L."/>
            <person name="Fabre E."/>
            <person name="Fairhead C."/>
            <person name="Ferry-Dumazet H."/>
            <person name="Groppi A."/>
            <person name="Hantraye F."/>
            <person name="Hennequin C."/>
            <person name="Jauniaux N."/>
            <person name="Joyet P."/>
            <person name="Kachouri R."/>
            <person name="Kerrest A."/>
            <person name="Koszul R."/>
            <person name="Lemaire M."/>
            <person name="Lesur I."/>
            <person name="Ma L."/>
            <person name="Muller H."/>
            <person name="Nicaud J.-M."/>
            <person name="Nikolski M."/>
            <person name="Oztas S."/>
            <person name="Ozier-Kalogeropoulos O."/>
            <person name="Pellenz S."/>
            <person name="Potier S."/>
            <person name="Richard G.-F."/>
            <person name="Straub M.-L."/>
            <person name="Suleau A."/>
            <person name="Swennen D."/>
            <person name="Tekaia F."/>
            <person name="Wesolowski-Louvel M."/>
            <person name="Westhof E."/>
            <person name="Wirth B."/>
            <person name="Zeniou-Meyer M."/>
            <person name="Zivanovic Y."/>
            <person name="Bolotin-Fukuhara M."/>
            <person name="Thierry A."/>
            <person name="Bouchier C."/>
            <person name="Caudron B."/>
            <person name="Scarpelli C."/>
            <person name="Gaillardin C."/>
            <person name="Weissenbach J."/>
            <person name="Wincker P."/>
            <person name="Souciet J.-L."/>
        </authorList>
    </citation>
    <scope>NUCLEOTIDE SEQUENCE [LARGE SCALE GENOMIC DNA]</scope>
    <source>
        <strain>ATCC 36239 / CBS 767 / BCRC 21394 / JCM 1990 / NBRC 0083 / IGC 2968</strain>
    </source>
</reference>
<comment type="function">
    <text evidence="1">Required for the assembly and/or stability of the 40S ribosomal subunit. Required for the processing of the 20S rRNA-precursor to mature 18S rRNA in a late step of the maturation of 40S ribosomal subunits.</text>
</comment>
<comment type="subunit">
    <text evidence="1">Component of the small ribosomal subunit. Mature ribosomes consist of a small (40S) and a large (60S) subunit. The 40S subunit contains about 33 different proteins and 1 molecule of RNA (18S). The 60S subunit contains about 49 different proteins and 3 molecules of RNA (25S, 5.8S and 5S). Interacts with RPS21.</text>
</comment>
<comment type="subcellular location">
    <subcellularLocation>
        <location evidence="1">Cytoplasm</location>
    </subcellularLocation>
</comment>
<comment type="similarity">
    <text evidence="1">Belongs to the universal ribosomal protein uS2 family.</text>
</comment>
<comment type="sequence caution" evidence="3">
    <conflict type="erroneous gene model prediction">
        <sequence resource="EMBL-CDS" id="CAG85591"/>
    </conflict>
</comment>
<proteinExistence type="inferred from homology"/>
<organism>
    <name type="scientific">Debaryomyces hansenii (strain ATCC 36239 / CBS 767 / BCRC 21394 / JCM 1990 / NBRC 0083 / IGC 2968)</name>
    <name type="common">Yeast</name>
    <name type="synonym">Torulaspora hansenii</name>
    <dbReference type="NCBI Taxonomy" id="284592"/>
    <lineage>
        <taxon>Eukaryota</taxon>
        <taxon>Fungi</taxon>
        <taxon>Dikarya</taxon>
        <taxon>Ascomycota</taxon>
        <taxon>Saccharomycotina</taxon>
        <taxon>Pichiomycetes</taxon>
        <taxon>Debaryomycetaceae</taxon>
        <taxon>Debaryomyces</taxon>
    </lineage>
</organism>
<sequence length="261" mass="28774">MSLPGSFDLTPEDAKLLLAANVHLGSKNVQVHNKPYVYKTRPDGVNVINVGKTWEKIVLAARIIAAIPNAADVAVCSTRTFGQRAVLKFAAHTGATPIAGRFTPGNFTNYITRSFKEPRLVVVTDPRTDFQAIKESSYVNIPVIALTDMDSPSEYVDVAIPCNNKGKHSIGLIWWLVAREVLRLRGIIPDRTTEWSVMPDLYFYRDPEEIEQNATEDIKTDDVEEAPAADAETEWTGETEEVDWAESGATPAAEEAAASNW</sequence>
<protein>
    <recommendedName>
        <fullName evidence="1">Small ribosomal subunit protein uS2</fullName>
    </recommendedName>
    <alternativeName>
        <fullName evidence="3">40S ribosomal protein S0</fullName>
    </alternativeName>
</protein>
<gene>
    <name evidence="1" type="primary">RPS0</name>
    <name type="ordered locus">DEHA2B14564g</name>
</gene>
<accession>Q6BW39</accession>